<reference key="1">
    <citation type="journal article" date="2003" name="Genome Res.">
        <title>Comparative genome analysis of Vibrio vulnificus, a marine pathogen.</title>
        <authorList>
            <person name="Chen C.-Y."/>
            <person name="Wu K.-M."/>
            <person name="Chang Y.-C."/>
            <person name="Chang C.-H."/>
            <person name="Tsai H.-C."/>
            <person name="Liao T.-L."/>
            <person name="Liu Y.-M."/>
            <person name="Chen H.-J."/>
            <person name="Shen A.B.-T."/>
            <person name="Li J.-C."/>
            <person name="Su T.-L."/>
            <person name="Shao C.-P."/>
            <person name="Lee C.-T."/>
            <person name="Hor L.-I."/>
            <person name="Tsai S.-F."/>
        </authorList>
    </citation>
    <scope>NUCLEOTIDE SEQUENCE [LARGE SCALE GENOMIC DNA]</scope>
    <source>
        <strain>YJ016</strain>
    </source>
</reference>
<proteinExistence type="inferred from homology"/>
<keyword id="KW-0028">Amino-acid biosynthesis</keyword>
<keyword id="KW-0057">Aromatic amino acid biosynthesis</keyword>
<keyword id="KW-0963">Cytoplasm</keyword>
<keyword id="KW-0808">Transferase</keyword>
<sequence>MESLTLQPIKKVNGEVNLPGSKSVSNRALLLAALAKGTTRLTNLLDSDDIRHMLNALTKLGVHYELSADKTVCVVEGLGRPFTATEAQELFLGNAGTAMRPLAAALCLGKGEFVLTGEPRMKERPIGHLVDALREAGAQIEYLENENYPPLKINATGLQAGTVNIDGSISSQFLTAFLMAAPLAQGEVKIHIVGELVSKPYIDITLHIMKQFGVDVVNNAYQEFIIPAGQSYVSPGQFLVEGDASSASYFLAAAAIKGGEIKVTGIGKNSIQGDIHFADALEKMGAEIEWGEDYVISRVGRLKGIDMDYNHIPDAAMTIATTALFAQGTTAIRNVYNWRVKETDRLSAMATELRKVGAEVEEGEDYLIVNPPQQLTHAAIDTYDDHRIAMCFSLVALSDTPVTINDPKCTSKTFPDYFDKLASLSELA</sequence>
<evidence type="ECO:0000255" key="1">
    <source>
        <dbReference type="HAMAP-Rule" id="MF_00210"/>
    </source>
</evidence>
<comment type="function">
    <text evidence="1">Catalyzes the transfer of the enolpyruvyl moiety of phosphoenolpyruvate (PEP) to the 5-hydroxyl of shikimate-3-phosphate (S3P) to produce enolpyruvyl shikimate-3-phosphate and inorganic phosphate.</text>
</comment>
<comment type="catalytic activity">
    <reaction evidence="1">
        <text>3-phosphoshikimate + phosphoenolpyruvate = 5-O-(1-carboxyvinyl)-3-phosphoshikimate + phosphate</text>
        <dbReference type="Rhea" id="RHEA:21256"/>
        <dbReference type="ChEBI" id="CHEBI:43474"/>
        <dbReference type="ChEBI" id="CHEBI:57701"/>
        <dbReference type="ChEBI" id="CHEBI:58702"/>
        <dbReference type="ChEBI" id="CHEBI:145989"/>
        <dbReference type="EC" id="2.5.1.19"/>
    </reaction>
    <physiologicalReaction direction="left-to-right" evidence="1">
        <dbReference type="Rhea" id="RHEA:21257"/>
    </physiologicalReaction>
</comment>
<comment type="pathway">
    <text evidence="1">Metabolic intermediate biosynthesis; chorismate biosynthesis; chorismate from D-erythrose 4-phosphate and phosphoenolpyruvate: step 6/7.</text>
</comment>
<comment type="subunit">
    <text evidence="1">Monomer.</text>
</comment>
<comment type="subcellular location">
    <subcellularLocation>
        <location evidence="1">Cytoplasm</location>
    </subcellularLocation>
</comment>
<comment type="similarity">
    <text evidence="1">Belongs to the EPSP synthase family.</text>
</comment>
<protein>
    <recommendedName>
        <fullName evidence="1">3-phosphoshikimate 1-carboxyvinyltransferase</fullName>
        <ecNumber evidence="1">2.5.1.19</ecNumber>
    </recommendedName>
    <alternativeName>
        <fullName evidence="1">5-enolpyruvylshikimate-3-phosphate synthase</fullName>
        <shortName evidence="1">EPSP synthase</shortName>
        <shortName evidence="1">EPSPS</shortName>
    </alternativeName>
</protein>
<organism>
    <name type="scientific">Vibrio vulnificus (strain YJ016)</name>
    <dbReference type="NCBI Taxonomy" id="196600"/>
    <lineage>
        <taxon>Bacteria</taxon>
        <taxon>Pseudomonadati</taxon>
        <taxon>Pseudomonadota</taxon>
        <taxon>Gammaproteobacteria</taxon>
        <taxon>Vibrionales</taxon>
        <taxon>Vibrionaceae</taxon>
        <taxon>Vibrio</taxon>
    </lineage>
</organism>
<name>AROA_VIBVY</name>
<accession>Q7MJ45</accession>
<dbReference type="EC" id="2.5.1.19" evidence="1"/>
<dbReference type="EMBL" id="BA000037">
    <property type="protein sequence ID" value="BAC95082.1"/>
    <property type="molecule type" value="Genomic_DNA"/>
</dbReference>
<dbReference type="RefSeq" id="WP_011150810.1">
    <property type="nucleotide sequence ID" value="NC_005139.1"/>
</dbReference>
<dbReference type="SMR" id="Q7MJ45"/>
<dbReference type="STRING" id="672.VV93_v1c20270"/>
<dbReference type="KEGG" id="vvy:VV2318"/>
<dbReference type="PATRIC" id="fig|196600.6.peg.2328"/>
<dbReference type="eggNOG" id="COG0128">
    <property type="taxonomic scope" value="Bacteria"/>
</dbReference>
<dbReference type="HOGENOM" id="CLU_024321_0_0_6"/>
<dbReference type="UniPathway" id="UPA00053">
    <property type="reaction ID" value="UER00089"/>
</dbReference>
<dbReference type="Proteomes" id="UP000002675">
    <property type="component" value="Chromosome I"/>
</dbReference>
<dbReference type="GO" id="GO:0005737">
    <property type="term" value="C:cytoplasm"/>
    <property type="evidence" value="ECO:0007669"/>
    <property type="project" value="UniProtKB-SubCell"/>
</dbReference>
<dbReference type="GO" id="GO:0003866">
    <property type="term" value="F:3-phosphoshikimate 1-carboxyvinyltransferase activity"/>
    <property type="evidence" value="ECO:0007669"/>
    <property type="project" value="UniProtKB-UniRule"/>
</dbReference>
<dbReference type="GO" id="GO:0008652">
    <property type="term" value="P:amino acid biosynthetic process"/>
    <property type="evidence" value="ECO:0007669"/>
    <property type="project" value="UniProtKB-KW"/>
</dbReference>
<dbReference type="GO" id="GO:0009073">
    <property type="term" value="P:aromatic amino acid family biosynthetic process"/>
    <property type="evidence" value="ECO:0007669"/>
    <property type="project" value="UniProtKB-KW"/>
</dbReference>
<dbReference type="GO" id="GO:0009423">
    <property type="term" value="P:chorismate biosynthetic process"/>
    <property type="evidence" value="ECO:0007669"/>
    <property type="project" value="UniProtKB-UniRule"/>
</dbReference>
<dbReference type="CDD" id="cd01556">
    <property type="entry name" value="EPSP_synthase"/>
    <property type="match status" value="1"/>
</dbReference>
<dbReference type="FunFam" id="3.65.10.10:FF:000003">
    <property type="entry name" value="3-phosphoshikimate 1-carboxyvinyltransferase"/>
    <property type="match status" value="1"/>
</dbReference>
<dbReference type="FunFam" id="3.65.10.10:FF:000004">
    <property type="entry name" value="3-phosphoshikimate 1-carboxyvinyltransferase"/>
    <property type="match status" value="1"/>
</dbReference>
<dbReference type="Gene3D" id="3.65.10.10">
    <property type="entry name" value="Enolpyruvate transferase domain"/>
    <property type="match status" value="2"/>
</dbReference>
<dbReference type="HAMAP" id="MF_00210">
    <property type="entry name" value="EPSP_synth"/>
    <property type="match status" value="1"/>
</dbReference>
<dbReference type="InterPro" id="IPR001986">
    <property type="entry name" value="Enolpyruvate_Tfrase_dom"/>
</dbReference>
<dbReference type="InterPro" id="IPR036968">
    <property type="entry name" value="Enolpyruvate_Tfrase_sf"/>
</dbReference>
<dbReference type="InterPro" id="IPR006264">
    <property type="entry name" value="EPSP_synthase"/>
</dbReference>
<dbReference type="InterPro" id="IPR023193">
    <property type="entry name" value="EPSP_synthase_CS"/>
</dbReference>
<dbReference type="InterPro" id="IPR013792">
    <property type="entry name" value="RNA3'P_cycl/enolpyr_Trfase_a/b"/>
</dbReference>
<dbReference type="NCBIfam" id="TIGR01356">
    <property type="entry name" value="aroA"/>
    <property type="match status" value="1"/>
</dbReference>
<dbReference type="PANTHER" id="PTHR21090">
    <property type="entry name" value="AROM/DEHYDROQUINATE SYNTHASE"/>
    <property type="match status" value="1"/>
</dbReference>
<dbReference type="PANTHER" id="PTHR21090:SF5">
    <property type="entry name" value="PENTAFUNCTIONAL AROM POLYPEPTIDE"/>
    <property type="match status" value="1"/>
</dbReference>
<dbReference type="Pfam" id="PF00275">
    <property type="entry name" value="EPSP_synthase"/>
    <property type="match status" value="1"/>
</dbReference>
<dbReference type="PIRSF" id="PIRSF000505">
    <property type="entry name" value="EPSPS"/>
    <property type="match status" value="1"/>
</dbReference>
<dbReference type="SUPFAM" id="SSF55205">
    <property type="entry name" value="EPT/RTPC-like"/>
    <property type="match status" value="1"/>
</dbReference>
<dbReference type="PROSITE" id="PS00104">
    <property type="entry name" value="EPSP_SYNTHASE_1"/>
    <property type="match status" value="1"/>
</dbReference>
<dbReference type="PROSITE" id="PS00885">
    <property type="entry name" value="EPSP_SYNTHASE_2"/>
    <property type="match status" value="1"/>
</dbReference>
<gene>
    <name evidence="1" type="primary">aroA</name>
    <name type="ordered locus">VV2318</name>
</gene>
<feature type="chain" id="PRO_0000088316" description="3-phosphoshikimate 1-carboxyvinyltransferase">
    <location>
        <begin position="1"/>
        <end position="428"/>
    </location>
</feature>
<feature type="active site" description="Proton acceptor" evidence="1">
    <location>
        <position position="314"/>
    </location>
</feature>
<feature type="binding site" evidence="1">
    <location>
        <position position="22"/>
    </location>
    <ligand>
        <name>3-phosphoshikimate</name>
        <dbReference type="ChEBI" id="CHEBI:145989"/>
    </ligand>
</feature>
<feature type="binding site" evidence="1">
    <location>
        <position position="22"/>
    </location>
    <ligand>
        <name>phosphoenolpyruvate</name>
        <dbReference type="ChEBI" id="CHEBI:58702"/>
    </ligand>
</feature>
<feature type="binding site" evidence="1">
    <location>
        <position position="23"/>
    </location>
    <ligand>
        <name>3-phosphoshikimate</name>
        <dbReference type="ChEBI" id="CHEBI:145989"/>
    </ligand>
</feature>
<feature type="binding site" evidence="1">
    <location>
        <position position="27"/>
    </location>
    <ligand>
        <name>3-phosphoshikimate</name>
        <dbReference type="ChEBI" id="CHEBI:145989"/>
    </ligand>
</feature>
<feature type="binding site" evidence="1">
    <location>
        <position position="96"/>
    </location>
    <ligand>
        <name>phosphoenolpyruvate</name>
        <dbReference type="ChEBI" id="CHEBI:58702"/>
    </ligand>
</feature>
<feature type="binding site" evidence="1">
    <location>
        <position position="124"/>
    </location>
    <ligand>
        <name>phosphoenolpyruvate</name>
        <dbReference type="ChEBI" id="CHEBI:58702"/>
    </ligand>
</feature>
<feature type="binding site" evidence="1">
    <location>
        <position position="170"/>
    </location>
    <ligand>
        <name>3-phosphoshikimate</name>
        <dbReference type="ChEBI" id="CHEBI:145989"/>
    </ligand>
</feature>
<feature type="binding site" evidence="1">
    <location>
        <position position="171"/>
    </location>
    <ligand>
        <name>3-phosphoshikimate</name>
        <dbReference type="ChEBI" id="CHEBI:145989"/>
    </ligand>
</feature>
<feature type="binding site" evidence="1">
    <location>
        <position position="172"/>
    </location>
    <ligand>
        <name>3-phosphoshikimate</name>
        <dbReference type="ChEBI" id="CHEBI:145989"/>
    </ligand>
</feature>
<feature type="binding site" evidence="1">
    <location>
        <position position="172"/>
    </location>
    <ligand>
        <name>phosphoenolpyruvate</name>
        <dbReference type="ChEBI" id="CHEBI:58702"/>
    </ligand>
</feature>
<feature type="binding site" evidence="1">
    <location>
        <position position="198"/>
    </location>
    <ligand>
        <name>3-phosphoshikimate</name>
        <dbReference type="ChEBI" id="CHEBI:145989"/>
    </ligand>
</feature>
<feature type="binding site" evidence="1">
    <location>
        <position position="314"/>
    </location>
    <ligand>
        <name>3-phosphoshikimate</name>
        <dbReference type="ChEBI" id="CHEBI:145989"/>
    </ligand>
</feature>
<feature type="binding site" evidence="1">
    <location>
        <position position="337"/>
    </location>
    <ligand>
        <name>3-phosphoshikimate</name>
        <dbReference type="ChEBI" id="CHEBI:145989"/>
    </ligand>
</feature>
<feature type="binding site" evidence="1">
    <location>
        <position position="341"/>
    </location>
    <ligand>
        <name>3-phosphoshikimate</name>
        <dbReference type="ChEBI" id="CHEBI:145989"/>
    </ligand>
</feature>
<feature type="binding site" evidence="1">
    <location>
        <position position="345"/>
    </location>
    <ligand>
        <name>phosphoenolpyruvate</name>
        <dbReference type="ChEBI" id="CHEBI:58702"/>
    </ligand>
</feature>
<feature type="binding site" evidence="1">
    <location>
        <position position="387"/>
    </location>
    <ligand>
        <name>phosphoenolpyruvate</name>
        <dbReference type="ChEBI" id="CHEBI:58702"/>
    </ligand>
</feature>
<feature type="binding site" evidence="1">
    <location>
        <position position="412"/>
    </location>
    <ligand>
        <name>phosphoenolpyruvate</name>
        <dbReference type="ChEBI" id="CHEBI:58702"/>
    </ligand>
</feature>